<comment type="function">
    <text evidence="1">May be involved in chemotaxis.</text>
</comment>
<comment type="catalytic activity">
    <reaction evidence="1">
        <text>[protein]-L-glutamate 5-O-methyl ester + H2O = L-glutamyl-[protein] + methanol + H(+)</text>
        <dbReference type="Rhea" id="RHEA:23236"/>
        <dbReference type="Rhea" id="RHEA-COMP:10208"/>
        <dbReference type="Rhea" id="RHEA-COMP:10311"/>
        <dbReference type="ChEBI" id="CHEBI:15377"/>
        <dbReference type="ChEBI" id="CHEBI:15378"/>
        <dbReference type="ChEBI" id="CHEBI:17790"/>
        <dbReference type="ChEBI" id="CHEBI:29973"/>
        <dbReference type="ChEBI" id="CHEBI:82795"/>
        <dbReference type="EC" id="3.1.1.61"/>
    </reaction>
</comment>
<comment type="catalytic activity">
    <reaction evidence="1">
        <text>L-glutaminyl-[protein] + H2O = L-glutamyl-[protein] + NH4(+)</text>
        <dbReference type="Rhea" id="RHEA:16441"/>
        <dbReference type="Rhea" id="RHEA-COMP:10207"/>
        <dbReference type="Rhea" id="RHEA-COMP:10208"/>
        <dbReference type="ChEBI" id="CHEBI:15377"/>
        <dbReference type="ChEBI" id="CHEBI:28938"/>
        <dbReference type="ChEBI" id="CHEBI:29973"/>
        <dbReference type="ChEBI" id="CHEBI:30011"/>
        <dbReference type="EC" id="3.5.1.44"/>
    </reaction>
</comment>
<comment type="subcellular location">
    <subcellularLocation>
        <location evidence="1">Cytoplasm</location>
    </subcellularLocation>
</comment>
<comment type="similarity">
    <text evidence="3">Belongs to the CheB family.</text>
</comment>
<protein>
    <recommendedName>
        <fullName evidence="3">Putative protein-glutamate methylesterase/protein-glutamine glutaminase</fullName>
        <ecNumber evidence="1">3.1.1.61</ecNumber>
        <ecNumber evidence="1">3.5.1.44</ecNumber>
    </recommendedName>
</protein>
<feature type="chain" id="PRO_0000158000" description="Putative protein-glutamate methylesterase/protein-glutamine glutaminase">
    <location>
        <begin position="1"/>
        <end position="193"/>
    </location>
</feature>
<feature type="domain" description="CheB-type methylesterase" evidence="2">
    <location>
        <begin position="1"/>
        <end position="179"/>
    </location>
</feature>
<feature type="active site" evidence="2">
    <location>
        <position position="11"/>
    </location>
</feature>
<feature type="active site" evidence="2">
    <location>
        <position position="38"/>
    </location>
</feature>
<feature type="active site" evidence="2">
    <location>
        <position position="131"/>
    </location>
</feature>
<gene>
    <name type="primary">cheB2</name>
    <name type="ordered locus">LIC_12061</name>
</gene>
<name>CHEB2_LEPIC</name>
<dbReference type="EC" id="3.1.1.61" evidence="1"/>
<dbReference type="EC" id="3.5.1.44" evidence="1"/>
<dbReference type="EMBL" id="AE016823">
    <property type="protein sequence ID" value="AAS70632.1"/>
    <property type="molecule type" value="Genomic_DNA"/>
</dbReference>
<dbReference type="RefSeq" id="WP_001105137.1">
    <property type="nucleotide sequence ID" value="NC_005823.1"/>
</dbReference>
<dbReference type="SMR" id="P62642"/>
<dbReference type="KEGG" id="lic:LIC_12061"/>
<dbReference type="HOGENOM" id="CLU_000445_51_2_12"/>
<dbReference type="Proteomes" id="UP000007037">
    <property type="component" value="Chromosome I"/>
</dbReference>
<dbReference type="GO" id="GO:0005737">
    <property type="term" value="C:cytoplasm"/>
    <property type="evidence" value="ECO:0007669"/>
    <property type="project" value="UniProtKB-SubCell"/>
</dbReference>
<dbReference type="GO" id="GO:0000156">
    <property type="term" value="F:phosphorelay response regulator activity"/>
    <property type="evidence" value="ECO:0007669"/>
    <property type="project" value="InterPro"/>
</dbReference>
<dbReference type="GO" id="GO:0008984">
    <property type="term" value="F:protein-glutamate methylesterase activity"/>
    <property type="evidence" value="ECO:0007669"/>
    <property type="project" value="UniProtKB-EC"/>
</dbReference>
<dbReference type="GO" id="GO:0050568">
    <property type="term" value="F:protein-glutamine glutaminase activity"/>
    <property type="evidence" value="ECO:0007669"/>
    <property type="project" value="UniProtKB-EC"/>
</dbReference>
<dbReference type="GO" id="GO:0006935">
    <property type="term" value="P:chemotaxis"/>
    <property type="evidence" value="ECO:0007669"/>
    <property type="project" value="UniProtKB-KW"/>
</dbReference>
<dbReference type="CDD" id="cd16433">
    <property type="entry name" value="CheB"/>
    <property type="match status" value="1"/>
</dbReference>
<dbReference type="Gene3D" id="3.40.50.180">
    <property type="entry name" value="Methylesterase CheB, C-terminal domain"/>
    <property type="match status" value="1"/>
</dbReference>
<dbReference type="InterPro" id="IPR035909">
    <property type="entry name" value="CheB_C"/>
</dbReference>
<dbReference type="InterPro" id="IPR000673">
    <property type="entry name" value="Sig_transdc_resp-reg_Me-estase"/>
</dbReference>
<dbReference type="PANTHER" id="PTHR42872">
    <property type="entry name" value="PROTEIN-GLUTAMATE METHYLESTERASE/PROTEIN-GLUTAMINE GLUTAMINASE"/>
    <property type="match status" value="1"/>
</dbReference>
<dbReference type="PANTHER" id="PTHR42872:SF3">
    <property type="entry name" value="PROTEIN-GLUTAMATE METHYLESTERASE_PROTEIN-GLUTAMINE GLUTAMINASE 1"/>
    <property type="match status" value="1"/>
</dbReference>
<dbReference type="Pfam" id="PF01339">
    <property type="entry name" value="CheB_methylest"/>
    <property type="match status" value="1"/>
</dbReference>
<dbReference type="SUPFAM" id="SSF52738">
    <property type="entry name" value="Methylesterase CheB, C-terminal domain"/>
    <property type="match status" value="1"/>
</dbReference>
<dbReference type="PROSITE" id="PS50122">
    <property type="entry name" value="CHEB"/>
    <property type="match status" value="1"/>
</dbReference>
<organism>
    <name type="scientific">Leptospira interrogans serogroup Icterohaemorrhagiae serovar copenhageni (strain Fiocruz L1-130)</name>
    <dbReference type="NCBI Taxonomy" id="267671"/>
    <lineage>
        <taxon>Bacteria</taxon>
        <taxon>Pseudomonadati</taxon>
        <taxon>Spirochaetota</taxon>
        <taxon>Spirochaetia</taxon>
        <taxon>Leptospirales</taxon>
        <taxon>Leptospiraceae</taxon>
        <taxon>Leptospira</taxon>
    </lineage>
</organism>
<sequence>MNYEAIVIGVSAGGINAMKTILPTLPTQFGIPIVIVQHIGARSDGEWFRILEKLCNIKIKEAEEKEEIKSGMVYVAPPNYHLLIEKDKTFSFSIGERVNFSRPSIDVLFETASEVYEDKLIGVILTGANSDGAQGLKKIKENGGLAVVQDPLTAEIALMPRSAIEATSVDYVLSLEKIAELFIRLDQNNLEQR</sequence>
<reference key="1">
    <citation type="journal article" date="2004" name="J. Bacteriol.">
        <title>Comparative genomics of two Leptospira interrogans serovars reveals novel insights into physiology and pathogenesis.</title>
        <authorList>
            <person name="Nascimento A.L.T.O."/>
            <person name="Ko A.I."/>
            <person name="Martins E.A.L."/>
            <person name="Monteiro-Vitorello C.B."/>
            <person name="Ho P.L."/>
            <person name="Haake D.A."/>
            <person name="Verjovski-Almeida S."/>
            <person name="Hartskeerl R.A."/>
            <person name="Marques M.V."/>
            <person name="Oliveira M.C."/>
            <person name="Menck C.F.M."/>
            <person name="Leite L.C.C."/>
            <person name="Carrer H."/>
            <person name="Coutinho L.L."/>
            <person name="Degrave W.M."/>
            <person name="Dellagostin O.A."/>
            <person name="El-Dorry H."/>
            <person name="Ferro E.S."/>
            <person name="Ferro M.I.T."/>
            <person name="Furlan L.R."/>
            <person name="Gamberini M."/>
            <person name="Giglioti E.A."/>
            <person name="Goes-Neto A."/>
            <person name="Goldman G.H."/>
            <person name="Goldman M.H.S."/>
            <person name="Harakava R."/>
            <person name="Jeronimo S.M.B."/>
            <person name="Junqueira-de-Azevedo I.L.M."/>
            <person name="Kimura E.T."/>
            <person name="Kuramae E.E."/>
            <person name="Lemos E.G.M."/>
            <person name="Lemos M.V.F."/>
            <person name="Marino C.L."/>
            <person name="Nunes L.R."/>
            <person name="de Oliveira R.C."/>
            <person name="Pereira G.G."/>
            <person name="Reis M.S."/>
            <person name="Schriefer A."/>
            <person name="Siqueira W.J."/>
            <person name="Sommer P."/>
            <person name="Tsai S.M."/>
            <person name="Simpson A.J.G."/>
            <person name="Ferro J.A."/>
            <person name="Camargo L.E.A."/>
            <person name="Kitajima J.P."/>
            <person name="Setubal J.C."/>
            <person name="Van Sluys M.A."/>
        </authorList>
    </citation>
    <scope>NUCLEOTIDE SEQUENCE [LARGE SCALE GENOMIC DNA]</scope>
    <source>
        <strain>Fiocruz L1-130</strain>
    </source>
</reference>
<evidence type="ECO:0000250" key="1"/>
<evidence type="ECO:0000255" key="2">
    <source>
        <dbReference type="PROSITE-ProRule" id="PRU00050"/>
    </source>
</evidence>
<evidence type="ECO:0000305" key="3"/>
<keyword id="KW-0145">Chemotaxis</keyword>
<keyword id="KW-0963">Cytoplasm</keyword>
<keyword id="KW-0378">Hydrolase</keyword>
<proteinExistence type="inferred from homology"/>
<accession>P62642</accession>
<accession>Q72QQ2</accession>